<accession>A1R6H1</accession>
<reference key="1">
    <citation type="journal article" date="2006" name="PLoS Genet.">
        <title>Secrets of soil survival revealed by the genome sequence of Arthrobacter aurescens TC1.</title>
        <authorList>
            <person name="Mongodin E.F."/>
            <person name="Shapir N."/>
            <person name="Daugherty S.C."/>
            <person name="DeBoy R.T."/>
            <person name="Emerson J.B."/>
            <person name="Shvartzbeyn A."/>
            <person name="Radune D."/>
            <person name="Vamathevan J."/>
            <person name="Riggs F."/>
            <person name="Grinberg V."/>
            <person name="Khouri H.M."/>
            <person name="Wackett L.P."/>
            <person name="Nelson K.E."/>
            <person name="Sadowsky M.J."/>
        </authorList>
    </citation>
    <scope>NUCLEOTIDE SEQUENCE [LARGE SCALE GENOMIC DNA]</scope>
    <source>
        <strain>TC1</strain>
    </source>
</reference>
<feature type="chain" id="PRO_1000009603" description="Phosphoglycerate kinase">
    <location>
        <begin position="1"/>
        <end position="408"/>
    </location>
</feature>
<feature type="binding site" evidence="1">
    <location>
        <begin position="24"/>
        <end position="26"/>
    </location>
    <ligand>
        <name>substrate</name>
    </ligand>
</feature>
<feature type="binding site" evidence="1">
    <location>
        <position position="39"/>
    </location>
    <ligand>
        <name>substrate</name>
    </ligand>
</feature>
<feature type="binding site" evidence="1">
    <location>
        <begin position="62"/>
        <end position="65"/>
    </location>
    <ligand>
        <name>substrate</name>
    </ligand>
</feature>
<feature type="binding site" evidence="1">
    <location>
        <position position="121"/>
    </location>
    <ligand>
        <name>substrate</name>
    </ligand>
</feature>
<feature type="binding site" evidence="1">
    <location>
        <position position="161"/>
    </location>
    <ligand>
        <name>substrate</name>
    </ligand>
</feature>
<feature type="binding site" evidence="1">
    <location>
        <position position="211"/>
    </location>
    <ligand>
        <name>ATP</name>
        <dbReference type="ChEBI" id="CHEBI:30616"/>
    </ligand>
</feature>
<feature type="binding site" evidence="1">
    <location>
        <position position="307"/>
    </location>
    <ligand>
        <name>ATP</name>
        <dbReference type="ChEBI" id="CHEBI:30616"/>
    </ligand>
</feature>
<feature type="binding site" evidence="1">
    <location>
        <position position="338"/>
    </location>
    <ligand>
        <name>ATP</name>
        <dbReference type="ChEBI" id="CHEBI:30616"/>
    </ligand>
</feature>
<feature type="binding site" evidence="1">
    <location>
        <begin position="364"/>
        <end position="367"/>
    </location>
    <ligand>
        <name>ATP</name>
        <dbReference type="ChEBI" id="CHEBI:30616"/>
    </ligand>
</feature>
<comment type="catalytic activity">
    <reaction evidence="1">
        <text>(2R)-3-phosphoglycerate + ATP = (2R)-3-phospho-glyceroyl phosphate + ADP</text>
        <dbReference type="Rhea" id="RHEA:14801"/>
        <dbReference type="ChEBI" id="CHEBI:30616"/>
        <dbReference type="ChEBI" id="CHEBI:57604"/>
        <dbReference type="ChEBI" id="CHEBI:58272"/>
        <dbReference type="ChEBI" id="CHEBI:456216"/>
        <dbReference type="EC" id="2.7.2.3"/>
    </reaction>
</comment>
<comment type="pathway">
    <text evidence="1">Carbohydrate degradation; glycolysis; pyruvate from D-glyceraldehyde 3-phosphate: step 2/5.</text>
</comment>
<comment type="subunit">
    <text evidence="1">Monomer.</text>
</comment>
<comment type="subcellular location">
    <subcellularLocation>
        <location evidence="1">Cytoplasm</location>
    </subcellularLocation>
</comment>
<comment type="similarity">
    <text evidence="1">Belongs to the phosphoglycerate kinase family.</text>
</comment>
<gene>
    <name evidence="1" type="primary">pgk</name>
    <name type="ordered locus">AAur_2089</name>
</gene>
<sequence>MTSHTLNELIAEGVRGRYILVRSDLNVPLDGSAVTDDGRIKASLPVLKKLSDAGARVLVTAHLGRPKGAPEDKYSLKPAAARLAELADFKVQLANDTVGDSAKELAAGLQDGEVLVLENVRFDARETSKDDAERGAFADELVALTGTNGAYVDDAFGAVHRKHASVFDVATRLPSYLGDLVHTEVEVLRKLTTDTQRPYVVVLGGSKVSDKLAVIDNLLGKADTILVGGGMLFTFLAAAGHKVAGSLLEEDQIPVVQDYLKRASDAGTSFVIPTDVVVASRFAADAEHEVVKADAIEDSTFGASGIGLDIGPESAAAFAAQIEGAKTVFWNGPMGVFEFEAFSSGTRAIAQALTDTVAFTVVGGGDSAAAVRTLGFEDSQFGHISTGGGASLEYLEGKELPGLSVLDR</sequence>
<protein>
    <recommendedName>
        <fullName evidence="1">Phosphoglycerate kinase</fullName>
        <ecNumber evidence="1">2.7.2.3</ecNumber>
    </recommendedName>
</protein>
<evidence type="ECO:0000255" key="1">
    <source>
        <dbReference type="HAMAP-Rule" id="MF_00145"/>
    </source>
</evidence>
<organism>
    <name type="scientific">Paenarthrobacter aurescens (strain TC1)</name>
    <dbReference type="NCBI Taxonomy" id="290340"/>
    <lineage>
        <taxon>Bacteria</taxon>
        <taxon>Bacillati</taxon>
        <taxon>Actinomycetota</taxon>
        <taxon>Actinomycetes</taxon>
        <taxon>Micrococcales</taxon>
        <taxon>Micrococcaceae</taxon>
        <taxon>Paenarthrobacter</taxon>
    </lineage>
</organism>
<proteinExistence type="inferred from homology"/>
<name>PGK_PAEAT</name>
<keyword id="KW-0067">ATP-binding</keyword>
<keyword id="KW-0963">Cytoplasm</keyword>
<keyword id="KW-0324">Glycolysis</keyword>
<keyword id="KW-0418">Kinase</keyword>
<keyword id="KW-0547">Nucleotide-binding</keyword>
<keyword id="KW-0808">Transferase</keyword>
<dbReference type="EC" id="2.7.2.3" evidence="1"/>
<dbReference type="EMBL" id="CP000474">
    <property type="protein sequence ID" value="ABM08929.1"/>
    <property type="molecule type" value="Genomic_DNA"/>
</dbReference>
<dbReference type="RefSeq" id="WP_011774777.1">
    <property type="nucleotide sequence ID" value="NC_008711.1"/>
</dbReference>
<dbReference type="SMR" id="A1R6H1"/>
<dbReference type="STRING" id="290340.AAur_2089"/>
<dbReference type="KEGG" id="aau:AAur_2089"/>
<dbReference type="eggNOG" id="COG0126">
    <property type="taxonomic scope" value="Bacteria"/>
</dbReference>
<dbReference type="HOGENOM" id="CLU_025427_0_2_11"/>
<dbReference type="OrthoDB" id="9808460at2"/>
<dbReference type="UniPathway" id="UPA00109">
    <property type="reaction ID" value="UER00185"/>
</dbReference>
<dbReference type="Proteomes" id="UP000000637">
    <property type="component" value="Chromosome"/>
</dbReference>
<dbReference type="GO" id="GO:0005829">
    <property type="term" value="C:cytosol"/>
    <property type="evidence" value="ECO:0007669"/>
    <property type="project" value="TreeGrafter"/>
</dbReference>
<dbReference type="GO" id="GO:0043531">
    <property type="term" value="F:ADP binding"/>
    <property type="evidence" value="ECO:0007669"/>
    <property type="project" value="TreeGrafter"/>
</dbReference>
<dbReference type="GO" id="GO:0005524">
    <property type="term" value="F:ATP binding"/>
    <property type="evidence" value="ECO:0007669"/>
    <property type="project" value="UniProtKB-KW"/>
</dbReference>
<dbReference type="GO" id="GO:0004618">
    <property type="term" value="F:phosphoglycerate kinase activity"/>
    <property type="evidence" value="ECO:0007669"/>
    <property type="project" value="UniProtKB-UniRule"/>
</dbReference>
<dbReference type="GO" id="GO:0006094">
    <property type="term" value="P:gluconeogenesis"/>
    <property type="evidence" value="ECO:0007669"/>
    <property type="project" value="TreeGrafter"/>
</dbReference>
<dbReference type="GO" id="GO:0006096">
    <property type="term" value="P:glycolytic process"/>
    <property type="evidence" value="ECO:0007669"/>
    <property type="project" value="UniProtKB-UniRule"/>
</dbReference>
<dbReference type="FunFam" id="3.40.50.1260:FF:000006">
    <property type="entry name" value="Phosphoglycerate kinase"/>
    <property type="match status" value="1"/>
</dbReference>
<dbReference type="FunFam" id="3.40.50.1260:FF:000031">
    <property type="entry name" value="Phosphoglycerate kinase 1"/>
    <property type="match status" value="1"/>
</dbReference>
<dbReference type="Gene3D" id="3.40.50.1260">
    <property type="entry name" value="Phosphoglycerate kinase, N-terminal domain"/>
    <property type="match status" value="2"/>
</dbReference>
<dbReference type="HAMAP" id="MF_00145">
    <property type="entry name" value="Phosphoglyc_kinase"/>
    <property type="match status" value="1"/>
</dbReference>
<dbReference type="InterPro" id="IPR001576">
    <property type="entry name" value="Phosphoglycerate_kinase"/>
</dbReference>
<dbReference type="InterPro" id="IPR015824">
    <property type="entry name" value="Phosphoglycerate_kinase_N"/>
</dbReference>
<dbReference type="InterPro" id="IPR036043">
    <property type="entry name" value="Phosphoglycerate_kinase_sf"/>
</dbReference>
<dbReference type="PANTHER" id="PTHR11406">
    <property type="entry name" value="PHOSPHOGLYCERATE KINASE"/>
    <property type="match status" value="1"/>
</dbReference>
<dbReference type="PANTHER" id="PTHR11406:SF23">
    <property type="entry name" value="PHOSPHOGLYCERATE KINASE 1, CHLOROPLASTIC-RELATED"/>
    <property type="match status" value="1"/>
</dbReference>
<dbReference type="Pfam" id="PF00162">
    <property type="entry name" value="PGK"/>
    <property type="match status" value="1"/>
</dbReference>
<dbReference type="PIRSF" id="PIRSF000724">
    <property type="entry name" value="Pgk"/>
    <property type="match status" value="1"/>
</dbReference>
<dbReference type="PRINTS" id="PR00477">
    <property type="entry name" value="PHGLYCKINASE"/>
</dbReference>
<dbReference type="SUPFAM" id="SSF53748">
    <property type="entry name" value="Phosphoglycerate kinase"/>
    <property type="match status" value="1"/>
</dbReference>